<sequence length="50" mass="5379">DLVXGTNFXKNNPXSTRVAANSXRSPSVYRQXXXXHAKKAAXPPAVVTLL</sequence>
<protein>
    <recommendedName>
        <fullName>Inducible serine protease inhibitor 1</fullName>
        <shortName>ISPI-1</shortName>
    </recommendedName>
</protein>
<evidence type="ECO:0000256" key="1">
    <source>
        <dbReference type="SAM" id="MobiDB-lite"/>
    </source>
</evidence>
<reference key="1">
    <citation type="journal article" date="2000" name="Eur. J. Biochem.">
        <title>Isolation and characterization of novel inducible serine protease inhibitors from larval hemolymph of the greater wax moth Galleria mellonella.</title>
        <authorList>
            <person name="Froebius A.C."/>
            <person name="Kanost M.R."/>
            <person name="Goetz P."/>
            <person name="Vilcinskas A."/>
        </authorList>
    </citation>
    <scope>PROTEIN SEQUENCE</scope>
    <source>
        <tissue>Hemolymph</tissue>
    </source>
</reference>
<keyword id="KW-0903">Direct protein sequencing</keyword>
<keyword id="KW-0646">Protease inhibitor</keyword>
<keyword id="KW-1185">Reference proteome</keyword>
<keyword id="KW-0722">Serine protease inhibitor</keyword>
<dbReference type="MEROPS" id="I83.002"/>
<dbReference type="InParanoid" id="P81905"/>
<dbReference type="Proteomes" id="UP000504614">
    <property type="component" value="Unplaced"/>
</dbReference>
<dbReference type="GO" id="GO:0004867">
    <property type="term" value="F:serine-type endopeptidase inhibitor activity"/>
    <property type="evidence" value="ECO:0007669"/>
    <property type="project" value="UniProtKB-KW"/>
</dbReference>
<dbReference type="Gene3D" id="2.10.80.20">
    <property type="match status" value="1"/>
</dbReference>
<dbReference type="InterPro" id="IPR021066">
    <property type="entry name" value="FPI1"/>
</dbReference>
<dbReference type="InterPro" id="IPR053741">
    <property type="entry name" value="Ser_Fungal_Prot_Inhib_sf"/>
</dbReference>
<dbReference type="Pfam" id="PF12190">
    <property type="entry name" value="amfpi-1"/>
    <property type="match status" value="1"/>
</dbReference>
<accession>P81905</accession>
<feature type="chain" id="PRO_0000084258" description="Inducible serine protease inhibitor 1">
    <location>
        <begin position="1"/>
        <end position="50" status="greater than"/>
    </location>
</feature>
<feature type="region of interest" description="Disordered" evidence="1">
    <location>
        <begin position="1"/>
        <end position="27"/>
    </location>
</feature>
<feature type="compositionally biased region" description="Polar residues" evidence="1">
    <location>
        <begin position="8"/>
        <end position="25"/>
    </location>
</feature>
<feature type="non-terminal residue">
    <location>
        <position position="50"/>
    </location>
</feature>
<name>ISP1_GALME</name>
<organism>
    <name type="scientific">Galleria mellonella</name>
    <name type="common">Greater wax moth</name>
    <dbReference type="NCBI Taxonomy" id="7137"/>
    <lineage>
        <taxon>Eukaryota</taxon>
        <taxon>Metazoa</taxon>
        <taxon>Ecdysozoa</taxon>
        <taxon>Arthropoda</taxon>
        <taxon>Hexapoda</taxon>
        <taxon>Insecta</taxon>
        <taxon>Pterygota</taxon>
        <taxon>Neoptera</taxon>
        <taxon>Endopterygota</taxon>
        <taxon>Lepidoptera</taxon>
        <taxon>Glossata</taxon>
        <taxon>Ditrysia</taxon>
        <taxon>Pyraloidea</taxon>
        <taxon>Pyralidae</taxon>
        <taxon>Galleriinae</taxon>
        <taxon>Galleria</taxon>
    </lineage>
</organism>
<comment type="function">
    <text>Inhibits trypsin and the toxin protease PR2 of M.anisopliae. Does not inhibit chymotrypsin, subtilisin Carlsberg, proteinase K, porcine pancreatic elastase and the toxin protease PR1 of M.anisopliae.</text>
</comment>
<comment type="developmental stage">
    <text>Last instar larvae.</text>
</comment>
<comment type="induction">
    <text>By infection.</text>
</comment>
<proteinExistence type="evidence at protein level"/>